<protein>
    <recommendedName>
        <fullName evidence="1">Proline--tRNA ligase</fullName>
        <ecNumber evidence="1">6.1.1.15</ecNumber>
    </recommendedName>
    <alternativeName>
        <fullName evidence="1">Prolyl-tRNA synthetase</fullName>
        <shortName evidence="1">ProRS</shortName>
    </alternativeName>
</protein>
<name>SYP_PERMH</name>
<gene>
    <name evidence="1" type="primary">proS</name>
    <name type="ordered locus">PERMA_0207</name>
</gene>
<accession>C0QTI8</accession>
<proteinExistence type="inferred from homology"/>
<dbReference type="EC" id="6.1.1.15" evidence="1"/>
<dbReference type="EMBL" id="CP001230">
    <property type="protein sequence ID" value="ACO03533.1"/>
    <property type="molecule type" value="Genomic_DNA"/>
</dbReference>
<dbReference type="RefSeq" id="WP_012675772.1">
    <property type="nucleotide sequence ID" value="NC_012440.1"/>
</dbReference>
<dbReference type="SMR" id="C0QTI8"/>
<dbReference type="STRING" id="123214.PERMA_0207"/>
<dbReference type="PaxDb" id="123214-PERMA_0207"/>
<dbReference type="KEGG" id="pmx:PERMA_0207"/>
<dbReference type="eggNOG" id="COG0442">
    <property type="taxonomic scope" value="Bacteria"/>
</dbReference>
<dbReference type="HOGENOM" id="CLU_016739_0_0_0"/>
<dbReference type="OrthoDB" id="9809052at2"/>
<dbReference type="Proteomes" id="UP000001366">
    <property type="component" value="Chromosome"/>
</dbReference>
<dbReference type="GO" id="GO:0005829">
    <property type="term" value="C:cytosol"/>
    <property type="evidence" value="ECO:0007669"/>
    <property type="project" value="TreeGrafter"/>
</dbReference>
<dbReference type="GO" id="GO:0002161">
    <property type="term" value="F:aminoacyl-tRNA deacylase activity"/>
    <property type="evidence" value="ECO:0007669"/>
    <property type="project" value="InterPro"/>
</dbReference>
<dbReference type="GO" id="GO:0005524">
    <property type="term" value="F:ATP binding"/>
    <property type="evidence" value="ECO:0007669"/>
    <property type="project" value="UniProtKB-UniRule"/>
</dbReference>
<dbReference type="GO" id="GO:0004827">
    <property type="term" value="F:proline-tRNA ligase activity"/>
    <property type="evidence" value="ECO:0007669"/>
    <property type="project" value="UniProtKB-UniRule"/>
</dbReference>
<dbReference type="GO" id="GO:0006433">
    <property type="term" value="P:prolyl-tRNA aminoacylation"/>
    <property type="evidence" value="ECO:0007669"/>
    <property type="project" value="UniProtKB-UniRule"/>
</dbReference>
<dbReference type="CDD" id="cd04334">
    <property type="entry name" value="ProRS-INS"/>
    <property type="match status" value="1"/>
</dbReference>
<dbReference type="CDD" id="cd00861">
    <property type="entry name" value="ProRS_anticodon_short"/>
    <property type="match status" value="1"/>
</dbReference>
<dbReference type="CDD" id="cd00779">
    <property type="entry name" value="ProRS_core_prok"/>
    <property type="match status" value="1"/>
</dbReference>
<dbReference type="FunFam" id="3.30.930.10:FF:000065">
    <property type="entry name" value="Proline--tRNA ligase"/>
    <property type="match status" value="1"/>
</dbReference>
<dbReference type="FunFam" id="3.30.930.10:FF:000066">
    <property type="entry name" value="Proline--tRNA ligase"/>
    <property type="match status" value="1"/>
</dbReference>
<dbReference type="FunFam" id="3.40.50.800:FF:000011">
    <property type="entry name" value="Proline--tRNA ligase"/>
    <property type="match status" value="1"/>
</dbReference>
<dbReference type="Gene3D" id="3.40.50.800">
    <property type="entry name" value="Anticodon-binding domain"/>
    <property type="match status" value="1"/>
</dbReference>
<dbReference type="Gene3D" id="3.30.930.10">
    <property type="entry name" value="Bira Bifunctional Protein, Domain 2"/>
    <property type="match status" value="2"/>
</dbReference>
<dbReference type="HAMAP" id="MF_01569">
    <property type="entry name" value="Pro_tRNA_synth_type1"/>
    <property type="match status" value="1"/>
</dbReference>
<dbReference type="InterPro" id="IPR002314">
    <property type="entry name" value="aa-tRNA-synt_IIb"/>
</dbReference>
<dbReference type="InterPro" id="IPR006195">
    <property type="entry name" value="aa-tRNA-synth_II"/>
</dbReference>
<dbReference type="InterPro" id="IPR045864">
    <property type="entry name" value="aa-tRNA-synth_II/BPL/LPL"/>
</dbReference>
<dbReference type="InterPro" id="IPR004154">
    <property type="entry name" value="Anticodon-bd"/>
</dbReference>
<dbReference type="InterPro" id="IPR036621">
    <property type="entry name" value="Anticodon-bd_dom_sf"/>
</dbReference>
<dbReference type="InterPro" id="IPR002316">
    <property type="entry name" value="Pro-tRNA-ligase_IIa"/>
</dbReference>
<dbReference type="InterPro" id="IPR004500">
    <property type="entry name" value="Pro-tRNA-synth_IIa_bac-type"/>
</dbReference>
<dbReference type="InterPro" id="IPR023717">
    <property type="entry name" value="Pro-tRNA-Synthase_IIa_type1"/>
</dbReference>
<dbReference type="InterPro" id="IPR050062">
    <property type="entry name" value="Pro-tRNA_synthetase"/>
</dbReference>
<dbReference type="InterPro" id="IPR044140">
    <property type="entry name" value="ProRS_anticodon_short"/>
</dbReference>
<dbReference type="InterPro" id="IPR033730">
    <property type="entry name" value="ProRS_core_prok"/>
</dbReference>
<dbReference type="InterPro" id="IPR036754">
    <property type="entry name" value="YbaK/aa-tRNA-synt-asso_dom_sf"/>
</dbReference>
<dbReference type="InterPro" id="IPR007214">
    <property type="entry name" value="YbaK/aa-tRNA-synth-assoc-dom"/>
</dbReference>
<dbReference type="NCBIfam" id="NF006625">
    <property type="entry name" value="PRK09194.1"/>
    <property type="match status" value="1"/>
</dbReference>
<dbReference type="NCBIfam" id="TIGR00409">
    <property type="entry name" value="proS_fam_II"/>
    <property type="match status" value="1"/>
</dbReference>
<dbReference type="PANTHER" id="PTHR42753">
    <property type="entry name" value="MITOCHONDRIAL RIBOSOME PROTEIN L39/PROLYL-TRNA LIGASE FAMILY MEMBER"/>
    <property type="match status" value="1"/>
</dbReference>
<dbReference type="PANTHER" id="PTHR42753:SF2">
    <property type="entry name" value="PROLINE--TRNA LIGASE"/>
    <property type="match status" value="1"/>
</dbReference>
<dbReference type="Pfam" id="PF03129">
    <property type="entry name" value="HGTP_anticodon"/>
    <property type="match status" value="1"/>
</dbReference>
<dbReference type="Pfam" id="PF00587">
    <property type="entry name" value="tRNA-synt_2b"/>
    <property type="match status" value="1"/>
</dbReference>
<dbReference type="Pfam" id="PF04073">
    <property type="entry name" value="tRNA_edit"/>
    <property type="match status" value="1"/>
</dbReference>
<dbReference type="PRINTS" id="PR01046">
    <property type="entry name" value="TRNASYNTHPRO"/>
</dbReference>
<dbReference type="SUPFAM" id="SSF52954">
    <property type="entry name" value="Class II aaRS ABD-related"/>
    <property type="match status" value="1"/>
</dbReference>
<dbReference type="SUPFAM" id="SSF55681">
    <property type="entry name" value="Class II aaRS and biotin synthetases"/>
    <property type="match status" value="1"/>
</dbReference>
<dbReference type="SUPFAM" id="SSF55826">
    <property type="entry name" value="YbaK/ProRS associated domain"/>
    <property type="match status" value="1"/>
</dbReference>
<dbReference type="PROSITE" id="PS50862">
    <property type="entry name" value="AA_TRNA_LIGASE_II"/>
    <property type="match status" value="1"/>
</dbReference>
<sequence length="563" mass="63789">MRASQYFIPTLKEAPAEAEVPSHIYLIRAGFIRQLAAGLYEYLPLGFRVLKKIEGIIRKYMDDAGALEVLLPILAPAELWQETGRWDVYGKELFRVEDRKGRFFALGPTHEETITDLVRKNIRSYKDLPKNFYQIQTKFRDEARPRYGLIRGREFIMKDAYSFDISEEMAVKSYEIMKEAYKKIFDELGLDYLMVEADVGAIGGKYSHEFVVKVPNGEAHIVFCDNCGYAANVEAAKYEFELDKLPPEDEKPLEKVHTPGVSSVEDVSRFLDINQKKIVKTLVYILDDGTAVAVLIRGDRELNETKLINYFKALDCHLASSEELKDLGIVEGFVGPMGLDIPVYADISVKDLHNFVVGANEEDYHYINVNIPRDFKPVDFVDFSTAREGDPCPVCKKPLNETTGLEVGHIFLLGTKYSEALKAYFVDKDGREKPIVMGCYGIGVSRLMAAAVEQSHDENGIIWPENIAPFKLHILALNIKDDQIKTVAEDIYTKAKEKGIEVLFDDRDISPGAKFKDADLIGIPYRIVVGRGVKNGKVEIQTRKDGKKEEIDINEIDNFLDRL</sequence>
<evidence type="ECO:0000255" key="1">
    <source>
        <dbReference type="HAMAP-Rule" id="MF_01569"/>
    </source>
</evidence>
<comment type="function">
    <text evidence="1">Catalyzes the attachment of proline to tRNA(Pro) in a two-step reaction: proline is first activated by ATP to form Pro-AMP and then transferred to the acceptor end of tRNA(Pro). As ProRS can inadvertently accommodate and process non-cognate amino acids such as alanine and cysteine, to avoid such errors it has two additional distinct editing activities against alanine. One activity is designated as 'pretransfer' editing and involves the tRNA(Pro)-independent hydrolysis of activated Ala-AMP. The other activity is designated 'posttransfer' editing and involves deacylation of mischarged Ala-tRNA(Pro). The misacylated Cys-tRNA(Pro) is not edited by ProRS.</text>
</comment>
<comment type="catalytic activity">
    <reaction evidence="1">
        <text>tRNA(Pro) + L-proline + ATP = L-prolyl-tRNA(Pro) + AMP + diphosphate</text>
        <dbReference type="Rhea" id="RHEA:14305"/>
        <dbReference type="Rhea" id="RHEA-COMP:9700"/>
        <dbReference type="Rhea" id="RHEA-COMP:9702"/>
        <dbReference type="ChEBI" id="CHEBI:30616"/>
        <dbReference type="ChEBI" id="CHEBI:33019"/>
        <dbReference type="ChEBI" id="CHEBI:60039"/>
        <dbReference type="ChEBI" id="CHEBI:78442"/>
        <dbReference type="ChEBI" id="CHEBI:78532"/>
        <dbReference type="ChEBI" id="CHEBI:456215"/>
        <dbReference type="EC" id="6.1.1.15"/>
    </reaction>
</comment>
<comment type="subunit">
    <text evidence="1">Homodimer.</text>
</comment>
<comment type="subcellular location">
    <subcellularLocation>
        <location evidence="1">Cytoplasm</location>
    </subcellularLocation>
</comment>
<comment type="domain">
    <text evidence="1">Consists of three domains: the N-terminal catalytic domain, the editing domain and the C-terminal anticodon-binding domain.</text>
</comment>
<comment type="similarity">
    <text evidence="1">Belongs to the class-II aminoacyl-tRNA synthetase family. ProS type 1 subfamily.</text>
</comment>
<organism>
    <name type="scientific">Persephonella marina (strain DSM 14350 / EX-H1)</name>
    <dbReference type="NCBI Taxonomy" id="123214"/>
    <lineage>
        <taxon>Bacteria</taxon>
        <taxon>Pseudomonadati</taxon>
        <taxon>Aquificota</taxon>
        <taxon>Aquificia</taxon>
        <taxon>Aquificales</taxon>
        <taxon>Hydrogenothermaceae</taxon>
        <taxon>Persephonella</taxon>
    </lineage>
</organism>
<keyword id="KW-0030">Aminoacyl-tRNA synthetase</keyword>
<keyword id="KW-0067">ATP-binding</keyword>
<keyword id="KW-0963">Cytoplasm</keyword>
<keyword id="KW-0436">Ligase</keyword>
<keyword id="KW-0547">Nucleotide-binding</keyword>
<keyword id="KW-0648">Protein biosynthesis</keyword>
<keyword id="KW-1185">Reference proteome</keyword>
<reference key="1">
    <citation type="journal article" date="2009" name="J. Bacteriol.">
        <title>Complete and draft genome sequences of six members of the Aquificales.</title>
        <authorList>
            <person name="Reysenbach A.-L."/>
            <person name="Hamamura N."/>
            <person name="Podar M."/>
            <person name="Griffiths E."/>
            <person name="Ferreira S."/>
            <person name="Hochstein R."/>
            <person name="Heidelberg J."/>
            <person name="Johnson J."/>
            <person name="Mead D."/>
            <person name="Pohorille A."/>
            <person name="Sarmiento M."/>
            <person name="Schweighofer K."/>
            <person name="Seshadri R."/>
            <person name="Voytek M.A."/>
        </authorList>
    </citation>
    <scope>NUCLEOTIDE SEQUENCE [LARGE SCALE GENOMIC DNA]</scope>
    <source>
        <strain>DSM 14350 / EX-H1</strain>
    </source>
</reference>
<feature type="chain" id="PRO_1000185508" description="Proline--tRNA ligase">
    <location>
        <begin position="1"/>
        <end position="563"/>
    </location>
</feature>